<protein>
    <recommendedName>
        <fullName>Transmembrane glycoprotein NMB</fullName>
    </recommendedName>
    <alternativeName>
        <fullName evidence="15">Hematopoietic growth factor inducible neurokinin-1 type</fullName>
    </alternativeName>
</protein>
<name>GPNMB_HUMAN</name>
<dbReference type="EMBL" id="X76534">
    <property type="protein sequence ID" value="CAA54044.1"/>
    <property type="molecule type" value="mRNA"/>
</dbReference>
<dbReference type="EMBL" id="AF322909">
    <property type="protein sequence ID" value="AAG42839.1"/>
    <property type="molecule type" value="mRNA"/>
</dbReference>
<dbReference type="EMBL" id="AY359124">
    <property type="protein sequence ID" value="AAQ89481.1"/>
    <property type="molecule type" value="mRNA"/>
</dbReference>
<dbReference type="EMBL" id="AC005082">
    <property type="protein sequence ID" value="AAP22336.1"/>
    <property type="molecule type" value="Genomic_DNA"/>
</dbReference>
<dbReference type="EMBL" id="CH236948">
    <property type="protein sequence ID" value="EAL24259.1"/>
    <property type="molecule type" value="Genomic_DNA"/>
</dbReference>
<dbReference type="EMBL" id="CH471073">
    <property type="protein sequence ID" value="EAW93782.1"/>
    <property type="molecule type" value="Genomic_DNA"/>
</dbReference>
<dbReference type="EMBL" id="BC032783">
    <property type="protein sequence ID" value="AAH32783.1"/>
    <property type="molecule type" value="mRNA"/>
</dbReference>
<dbReference type="CCDS" id="CCDS34610.1">
    <molecule id="Q14956-1"/>
</dbReference>
<dbReference type="CCDS" id="CCDS5380.1">
    <molecule id="Q14956-2"/>
</dbReference>
<dbReference type="PIR" id="I38065">
    <property type="entry name" value="I38065"/>
</dbReference>
<dbReference type="RefSeq" id="NP_001005340.1">
    <molecule id="Q14956-1"/>
    <property type="nucleotide sequence ID" value="NM_001005340.2"/>
</dbReference>
<dbReference type="RefSeq" id="NP_002501.1">
    <molecule id="Q14956-2"/>
    <property type="nucleotide sequence ID" value="NM_002510.3"/>
</dbReference>
<dbReference type="RefSeq" id="XP_047275732.1">
    <molecule id="Q14956-1"/>
    <property type="nucleotide sequence ID" value="XM_047419776.1"/>
</dbReference>
<dbReference type="BioGRID" id="115720">
    <property type="interactions" value="23"/>
</dbReference>
<dbReference type="DIP" id="DIP-57606N"/>
<dbReference type="FunCoup" id="Q14956">
    <property type="interactions" value="704"/>
</dbReference>
<dbReference type="IntAct" id="Q14956">
    <property type="interactions" value="9"/>
</dbReference>
<dbReference type="MINT" id="Q14956"/>
<dbReference type="STRING" id="9606.ENSP00000371420"/>
<dbReference type="ChEMBL" id="CHEMBL3712919"/>
<dbReference type="DrugBank" id="DB05996">
    <property type="generic name" value="Glembatumumab vedotin"/>
</dbReference>
<dbReference type="GlyConnect" id="1847">
    <property type="glycosylation" value="27 N-Linked glycans (4 sites)"/>
</dbReference>
<dbReference type="GlyCosmos" id="Q14956">
    <property type="glycosylation" value="13 sites, 27 glycans"/>
</dbReference>
<dbReference type="GlyGen" id="Q14956">
    <property type="glycosylation" value="16 sites, 207 N-linked glycans (4 sites), 2 O-linked glycans (2 sites)"/>
</dbReference>
<dbReference type="iPTMnet" id="Q14956"/>
<dbReference type="PhosphoSitePlus" id="Q14956"/>
<dbReference type="BioMuta" id="GPNMB"/>
<dbReference type="DMDM" id="61252504"/>
<dbReference type="jPOST" id="Q14956"/>
<dbReference type="MassIVE" id="Q14956"/>
<dbReference type="PaxDb" id="9606-ENSP00000371420"/>
<dbReference type="PeptideAtlas" id="Q14956"/>
<dbReference type="ProteomicsDB" id="60258">
    <molecule id="Q14956-1"/>
</dbReference>
<dbReference type="ProteomicsDB" id="60259">
    <molecule id="Q14956-2"/>
</dbReference>
<dbReference type="Pumba" id="Q14956"/>
<dbReference type="ABCD" id="Q14956">
    <property type="antibodies" value="1 sequenced antibody"/>
</dbReference>
<dbReference type="Antibodypedia" id="12086">
    <property type="antibodies" value="488 antibodies from 36 providers"/>
</dbReference>
<dbReference type="DNASU" id="10457"/>
<dbReference type="Ensembl" id="ENST00000258733.9">
    <molecule id="Q14956-2"/>
    <property type="protein sequence ID" value="ENSP00000258733.5"/>
    <property type="gene ID" value="ENSG00000136235.17"/>
</dbReference>
<dbReference type="Ensembl" id="ENST00000381990.6">
    <molecule id="Q14956-1"/>
    <property type="protein sequence ID" value="ENSP00000371420.2"/>
    <property type="gene ID" value="ENSG00000136235.17"/>
</dbReference>
<dbReference type="GeneID" id="10457"/>
<dbReference type="KEGG" id="hsa:10457"/>
<dbReference type="MANE-Select" id="ENST00000258733.9">
    <molecule id="Q14956-2"/>
    <property type="protein sequence ID" value="ENSP00000258733.5"/>
    <property type="RefSeq nucleotide sequence ID" value="NM_002510.3"/>
    <property type="RefSeq protein sequence ID" value="NP_002501.1"/>
</dbReference>
<dbReference type="UCSC" id="uc003swb.4">
    <molecule id="Q14956-1"/>
    <property type="organism name" value="human"/>
</dbReference>
<dbReference type="AGR" id="HGNC:4462"/>
<dbReference type="CTD" id="10457"/>
<dbReference type="DisGeNET" id="10457"/>
<dbReference type="GeneCards" id="GPNMB"/>
<dbReference type="HGNC" id="HGNC:4462">
    <property type="gene designation" value="GPNMB"/>
</dbReference>
<dbReference type="HPA" id="ENSG00000136235">
    <property type="expression patterns" value="Tissue enhanced (skin)"/>
</dbReference>
<dbReference type="MalaCards" id="GPNMB"/>
<dbReference type="MIM" id="604368">
    <property type="type" value="gene"/>
</dbReference>
<dbReference type="MIM" id="617920">
    <property type="type" value="phenotype"/>
</dbReference>
<dbReference type="neXtProt" id="NX_Q14956"/>
<dbReference type="OpenTargets" id="ENSG00000136235"/>
<dbReference type="Orphanet" id="319635">
    <property type="disease" value="Amyloidosis cutis dyschromia"/>
</dbReference>
<dbReference type="PharmGKB" id="PA28845"/>
<dbReference type="VEuPathDB" id="HostDB:ENSG00000136235"/>
<dbReference type="eggNOG" id="ENOG502QVWX">
    <property type="taxonomic scope" value="Eukaryota"/>
</dbReference>
<dbReference type="GeneTree" id="ENSGT00950000183188"/>
<dbReference type="HOGENOM" id="CLU_017264_1_0_1"/>
<dbReference type="InParanoid" id="Q14956"/>
<dbReference type="OrthoDB" id="9940970at2759"/>
<dbReference type="PAN-GO" id="Q14956">
    <property type="GO annotations" value="3 GO annotations based on evolutionary models"/>
</dbReference>
<dbReference type="PhylomeDB" id="Q14956"/>
<dbReference type="TreeFam" id="TF334865"/>
<dbReference type="PathwayCommons" id="Q14956"/>
<dbReference type="Reactome" id="R-HSA-8857538">
    <property type="pathway name" value="PTK6 promotes HIF1A stabilization"/>
</dbReference>
<dbReference type="SignaLink" id="Q14956"/>
<dbReference type="BioGRID-ORCS" id="10457">
    <property type="hits" value="11 hits in 1153 CRISPR screens"/>
</dbReference>
<dbReference type="ChiTaRS" id="GPNMB">
    <property type="organism name" value="human"/>
</dbReference>
<dbReference type="GeneWiki" id="GPNMB"/>
<dbReference type="GenomeRNAi" id="10457"/>
<dbReference type="Pharos" id="Q14956">
    <property type="development level" value="Tbio"/>
</dbReference>
<dbReference type="PRO" id="PR:Q14956"/>
<dbReference type="Proteomes" id="UP000005640">
    <property type="component" value="Chromosome 7"/>
</dbReference>
<dbReference type="RNAct" id="Q14956">
    <property type="molecule type" value="protein"/>
</dbReference>
<dbReference type="Bgee" id="ENSG00000136235">
    <property type="expression patterns" value="Expressed in upper leg skin and 204 other cell types or tissues"/>
</dbReference>
<dbReference type="ExpressionAtlas" id="Q14956">
    <property type="expression patterns" value="baseline and differential"/>
</dbReference>
<dbReference type="GO" id="GO:0031901">
    <property type="term" value="C:early endosome membrane"/>
    <property type="evidence" value="ECO:0007669"/>
    <property type="project" value="UniProtKB-SubCell"/>
</dbReference>
<dbReference type="GO" id="GO:0033162">
    <property type="term" value="C:melanosome membrane"/>
    <property type="evidence" value="ECO:0007669"/>
    <property type="project" value="UniProtKB-SubCell"/>
</dbReference>
<dbReference type="GO" id="GO:0016020">
    <property type="term" value="C:membrane"/>
    <property type="evidence" value="ECO:0000314"/>
    <property type="project" value="ParkinsonsUK-UCL"/>
</dbReference>
<dbReference type="GO" id="GO:0005886">
    <property type="term" value="C:plasma membrane"/>
    <property type="evidence" value="ECO:0000318"/>
    <property type="project" value="GO_Central"/>
</dbReference>
<dbReference type="GO" id="GO:0042056">
    <property type="term" value="F:chemoattractant activity"/>
    <property type="evidence" value="ECO:0000303"/>
    <property type="project" value="ParkinsonsUK-UCL"/>
</dbReference>
<dbReference type="GO" id="GO:0008201">
    <property type="term" value="F:heparin binding"/>
    <property type="evidence" value="ECO:0000314"/>
    <property type="project" value="ParkinsonsUK-UCL"/>
</dbReference>
<dbReference type="GO" id="GO:0005178">
    <property type="term" value="F:integrin binding"/>
    <property type="evidence" value="ECO:0000318"/>
    <property type="project" value="GO_Central"/>
</dbReference>
<dbReference type="GO" id="GO:0048018">
    <property type="term" value="F:receptor ligand activity"/>
    <property type="evidence" value="ECO:0000315"/>
    <property type="project" value="ParkinsonsUK-UCL"/>
</dbReference>
<dbReference type="GO" id="GO:0045545">
    <property type="term" value="F:syndecan binding"/>
    <property type="evidence" value="ECO:0000353"/>
    <property type="project" value="ParkinsonsUK-UCL"/>
</dbReference>
<dbReference type="GO" id="GO:0007155">
    <property type="term" value="P:cell adhesion"/>
    <property type="evidence" value="ECO:0000318"/>
    <property type="project" value="GO_Central"/>
</dbReference>
<dbReference type="GO" id="GO:0007267">
    <property type="term" value="P:cell-cell signaling"/>
    <property type="evidence" value="ECO:0000315"/>
    <property type="project" value="ParkinsonsUK-UCL"/>
</dbReference>
<dbReference type="GO" id="GO:0008285">
    <property type="term" value="P:negative regulation of cell population proliferation"/>
    <property type="evidence" value="ECO:0000304"/>
    <property type="project" value="ProtInc"/>
</dbReference>
<dbReference type="GO" id="GO:0001818">
    <property type="term" value="P:negative regulation of cytokine production"/>
    <property type="evidence" value="ECO:0000314"/>
    <property type="project" value="ParkinsonsUK-UCL"/>
</dbReference>
<dbReference type="GO" id="GO:2000134">
    <property type="term" value="P:negative regulation of G1/S transition of mitotic cell cycle"/>
    <property type="evidence" value="ECO:0000314"/>
    <property type="project" value="ParkinsonsUK-UCL"/>
</dbReference>
<dbReference type="GO" id="GO:0050868">
    <property type="term" value="P:negative regulation of T cell activation"/>
    <property type="evidence" value="ECO:0000315"/>
    <property type="project" value="ParkinsonsUK-UCL"/>
</dbReference>
<dbReference type="GO" id="GO:0042130">
    <property type="term" value="P:negative regulation of T cell proliferation"/>
    <property type="evidence" value="ECO:0000314"/>
    <property type="project" value="ParkinsonsUK-UCL"/>
</dbReference>
<dbReference type="GO" id="GO:0032720">
    <property type="term" value="P:negative regulation of tumor necrosis factor production"/>
    <property type="evidence" value="ECO:0007669"/>
    <property type="project" value="Ensembl"/>
</dbReference>
<dbReference type="GO" id="GO:0050918">
    <property type="term" value="P:positive chemotaxis"/>
    <property type="evidence" value="ECO:0000303"/>
    <property type="project" value="ParkinsonsUK-UCL"/>
</dbReference>
<dbReference type="GO" id="GO:0030335">
    <property type="term" value="P:positive regulation of cell migration"/>
    <property type="evidence" value="ECO:0000314"/>
    <property type="project" value="ParkinsonsUK-UCL"/>
</dbReference>
<dbReference type="GO" id="GO:0070374">
    <property type="term" value="P:positive regulation of ERK1 and ERK2 cascade"/>
    <property type="evidence" value="ECO:0000304"/>
    <property type="project" value="ParkinsonsUK-UCL"/>
</dbReference>
<dbReference type="GO" id="GO:0045765">
    <property type="term" value="P:regulation of angiogenesis"/>
    <property type="evidence" value="ECO:0000303"/>
    <property type="project" value="ParkinsonsUK-UCL"/>
</dbReference>
<dbReference type="GO" id="GO:0034103">
    <property type="term" value="P:regulation of tissue remodeling"/>
    <property type="evidence" value="ECO:0000314"/>
    <property type="project" value="ParkinsonsUK-UCL"/>
</dbReference>
<dbReference type="GO" id="GO:0007165">
    <property type="term" value="P:signal transduction"/>
    <property type="evidence" value="ECO:0000315"/>
    <property type="project" value="ParkinsonsUK-UCL"/>
</dbReference>
<dbReference type="CDD" id="cd00146">
    <property type="entry name" value="PKD"/>
    <property type="match status" value="1"/>
</dbReference>
<dbReference type="FunFam" id="2.60.40.10:FF:000893">
    <property type="entry name" value="Transmembrane glycoprotein NMB"/>
    <property type="match status" value="1"/>
</dbReference>
<dbReference type="Gene3D" id="2.60.40.10">
    <property type="entry name" value="Immunoglobulins"/>
    <property type="match status" value="1"/>
</dbReference>
<dbReference type="InterPro" id="IPR013783">
    <property type="entry name" value="Ig-like_fold"/>
</dbReference>
<dbReference type="InterPro" id="IPR045219">
    <property type="entry name" value="PKAT"/>
</dbReference>
<dbReference type="InterPro" id="IPR046846">
    <property type="entry name" value="PKAT_KLD"/>
</dbReference>
<dbReference type="InterPro" id="IPR022409">
    <property type="entry name" value="PKD/Chitinase_dom"/>
</dbReference>
<dbReference type="InterPro" id="IPR000601">
    <property type="entry name" value="PKD_dom"/>
</dbReference>
<dbReference type="InterPro" id="IPR035986">
    <property type="entry name" value="PKD_dom_sf"/>
</dbReference>
<dbReference type="PANTHER" id="PTHR11861">
    <property type="entry name" value="MELANOCYTE PROTEIN PMEL 17-RELATED"/>
    <property type="match status" value="1"/>
</dbReference>
<dbReference type="PANTHER" id="PTHR11861:SF11">
    <property type="entry name" value="TRANSMEMBRANE GLYCOPROTEIN NMB"/>
    <property type="match status" value="1"/>
</dbReference>
<dbReference type="Pfam" id="PF20433">
    <property type="entry name" value="PKAT_KLD"/>
    <property type="match status" value="1"/>
</dbReference>
<dbReference type="Pfam" id="PF18911">
    <property type="entry name" value="PKD_4"/>
    <property type="match status" value="1"/>
</dbReference>
<dbReference type="SMART" id="SM00089">
    <property type="entry name" value="PKD"/>
    <property type="match status" value="1"/>
</dbReference>
<dbReference type="SUPFAM" id="SSF49299">
    <property type="entry name" value="PKD domain"/>
    <property type="match status" value="1"/>
</dbReference>
<dbReference type="PROSITE" id="PS50093">
    <property type="entry name" value="PKD"/>
    <property type="match status" value="1"/>
</dbReference>
<organism>
    <name type="scientific">Homo sapiens</name>
    <name type="common">Human</name>
    <dbReference type="NCBI Taxonomy" id="9606"/>
    <lineage>
        <taxon>Eukaryota</taxon>
        <taxon>Metazoa</taxon>
        <taxon>Chordata</taxon>
        <taxon>Craniata</taxon>
        <taxon>Vertebrata</taxon>
        <taxon>Euteleostomi</taxon>
        <taxon>Mammalia</taxon>
        <taxon>Eutheria</taxon>
        <taxon>Euarchontoglires</taxon>
        <taxon>Primates</taxon>
        <taxon>Haplorrhini</taxon>
        <taxon>Catarrhini</taxon>
        <taxon>Hominidae</taxon>
        <taxon>Homo</taxon>
    </lineage>
</organism>
<sequence>MECLYYFLGFLLLAARLPLDAAKRFHDVLGNERPSAYMREHNQLNGWSSDENDWNEKLYPVWKRGDMRWKNSWKGGRVQAVLTSDSPALVGSNITFAVNLIFPRCQKEDANGNIVYEKNCRNEAGLSADPYVYNWTAWSEDSDGENGTGQSHHNVFPDGKPFPHHPGWRRWNFIYVFHTLGQYFQKLGRCSVRVSVNTANVTLGPQLMEVTVYRRHGRAYVPIAQVKDVYVVTDQIPVFVTMFQKNDRNSSDETFLKDLPIMFDVLIHDPSHFLNYSTINYKWSFGDNTGLFVSTNHTVNHTYVLNGTFSLNLTVKAAAPGPCPPPPPPPRPSKPTPSLATTLKSYDSNTPGPAGDNPLELSRIPDENCQINRYGHFQATITIVEGILEVNIIQMTDVLMPVPWPESSLIDFVVTCQGSIPTEVCTIISDPTCEITQNTVCSPVDVDEMCLLTVRRTFNGSGTYCVNLTLGDDTSLALTSTLISVPDRDPASPLRMANSALISVGCLAIFVTVISLLVYKKHKEYNPIENSPGNVVRSKGLSVFLNRAKAVFFPGNQEKDPLLKNQEFKGVS</sequence>
<keyword id="KW-0025">Alternative splicing</keyword>
<keyword id="KW-1008">Amyloidosis</keyword>
<keyword id="KW-1003">Cell membrane</keyword>
<keyword id="KW-0225">Disease variant</keyword>
<keyword id="KW-0967">Endosome</keyword>
<keyword id="KW-0325">Glycoprotein</keyword>
<keyword id="KW-0472">Membrane</keyword>
<keyword id="KW-0597">Phosphoprotein</keyword>
<keyword id="KW-1267">Proteomics identification</keyword>
<keyword id="KW-1185">Reference proteome</keyword>
<keyword id="KW-0732">Signal</keyword>
<keyword id="KW-0812">Transmembrane</keyword>
<keyword id="KW-1133">Transmembrane helix</keyword>
<evidence type="ECO:0000250" key="1"/>
<evidence type="ECO:0000250" key="2">
    <source>
        <dbReference type="UniProtKB" id="Q99P91"/>
    </source>
</evidence>
<evidence type="ECO:0000255" key="3"/>
<evidence type="ECO:0000255" key="4">
    <source>
        <dbReference type="PROSITE-ProRule" id="PRU00151"/>
    </source>
</evidence>
<evidence type="ECO:0000256" key="5">
    <source>
        <dbReference type="SAM" id="MobiDB-lite"/>
    </source>
</evidence>
<evidence type="ECO:0000269" key="6">
    <source>
    </source>
</evidence>
<evidence type="ECO:0000269" key="7">
    <source>
    </source>
</evidence>
<evidence type="ECO:0000269" key="8">
    <source>
    </source>
</evidence>
<evidence type="ECO:0000269" key="9">
    <source>
    </source>
</evidence>
<evidence type="ECO:0000269" key="10">
    <source>
    </source>
</evidence>
<evidence type="ECO:0000269" key="11">
    <source>
    </source>
</evidence>
<evidence type="ECO:0000269" key="12">
    <source>
    </source>
</evidence>
<evidence type="ECO:0000269" key="13">
    <source>
    </source>
</evidence>
<evidence type="ECO:0000269" key="14">
    <source>
    </source>
</evidence>
<evidence type="ECO:0000303" key="15">
    <source>
    </source>
</evidence>
<evidence type="ECO:0000303" key="16">
    <source>
    </source>
</evidence>
<evidence type="ECO:0000305" key="17"/>
<feature type="signal peptide" evidence="3">
    <location>
        <begin position="1"/>
        <end position="22"/>
    </location>
</feature>
<feature type="chain" id="PRO_0000024709" description="Transmembrane glycoprotein NMB">
    <location>
        <begin position="23"/>
        <end position="572"/>
    </location>
</feature>
<feature type="topological domain" description="Extracellular" evidence="3">
    <location>
        <begin position="23"/>
        <end position="498"/>
    </location>
</feature>
<feature type="transmembrane region" description="Helical" evidence="3">
    <location>
        <begin position="499"/>
        <end position="519"/>
    </location>
</feature>
<feature type="topological domain" description="Cytoplasmic" evidence="3">
    <location>
        <begin position="520"/>
        <end position="572"/>
    </location>
</feature>
<feature type="domain" description="PKD" evidence="4">
    <location>
        <begin position="240"/>
        <end position="327"/>
    </location>
</feature>
<feature type="region of interest" description="Disordered" evidence="5">
    <location>
        <begin position="320"/>
        <end position="362"/>
    </location>
</feature>
<feature type="short sequence motif" description="Cell attachment site" evidence="3">
    <location>
        <begin position="64"/>
        <end position="66"/>
    </location>
</feature>
<feature type="compositionally biased region" description="Pro residues" evidence="5">
    <location>
        <begin position="321"/>
        <end position="335"/>
    </location>
</feature>
<feature type="compositionally biased region" description="Polar residues" evidence="5">
    <location>
        <begin position="338"/>
        <end position="351"/>
    </location>
</feature>
<feature type="modified residue" description="Phosphoserine" evidence="2">
    <location>
        <position position="542"/>
    </location>
</feature>
<feature type="glycosylation site" description="N-linked (GlcNAc...) asparagine" evidence="3">
    <location>
        <position position="93"/>
    </location>
</feature>
<feature type="glycosylation site" description="N-linked (GlcNAc...) asparagine" evidence="3">
    <location>
        <position position="134"/>
    </location>
</feature>
<feature type="glycosylation site" description="N-linked (GlcNAc...) asparagine" evidence="3">
    <location>
        <position position="146"/>
    </location>
</feature>
<feature type="glycosylation site" description="N-linked (GlcNAc...) asparagine" evidence="12">
    <location>
        <position position="200"/>
    </location>
</feature>
<feature type="glycosylation site" description="N-linked (GlcNAc...) asparagine" evidence="12">
    <location>
        <position position="249"/>
    </location>
</feature>
<feature type="glycosylation site" description="N-linked (GlcNAc...) asparagine" evidence="12">
    <location>
        <position position="275"/>
    </location>
</feature>
<feature type="glycosylation site" description="N-linked (GlcNAc...) asparagine" evidence="12">
    <location>
        <position position="296"/>
    </location>
</feature>
<feature type="glycosylation site" description="N-linked (GlcNAc...) asparagine" evidence="12">
    <location>
        <position position="300"/>
    </location>
</feature>
<feature type="glycosylation site" description="N-linked (GlcNAc...) asparagine" evidence="12">
    <location>
        <position position="306"/>
    </location>
</feature>
<feature type="glycosylation site" description="N-linked (GlcNAc...) asparagine" evidence="3">
    <location>
        <position position="312"/>
    </location>
</feature>
<feature type="glycosylation site" description="N-linked (GlcNAc...) asparagine" evidence="3">
    <location>
        <position position="459"/>
    </location>
</feature>
<feature type="glycosylation site" description="N-linked (GlcNAc...) asparagine" evidence="3">
    <location>
        <position position="467"/>
    </location>
</feature>
<feature type="splice variant" id="VSP_013001" description="In isoform 2." evidence="15 16">
    <location>
        <begin position="340"/>
        <end position="351"/>
    </location>
</feature>
<feature type="sequence variant" id="VAR_036262" description="In a breast cancer sample; somatic mutation; dbSNP:rs755767733." evidence="10">
    <original>A</original>
    <variation>D</variation>
    <location>
        <position position="110"/>
    </location>
</feature>
<feature type="sequence variant" id="VAR_080643" description="In PLCA3; may be expressed at much lower levels than wild-type protein; mislocalized to the endoplasmic reticulum and nuclear envelope." evidence="13">
    <location>
        <begin position="189"/>
        <end position="572"/>
    </location>
</feature>
<feature type="sequence variant" id="VAR_012076" description="In dbSNP:rs530436.">
    <original>S</original>
    <variation>C</variation>
    <location>
        <position position="195"/>
    </location>
</feature>
<feature type="sequence variant" id="VAR_012077" description="In dbSNP:rs530413.">
    <original>N</original>
    <variation>H</variation>
    <location>
        <position position="197"/>
    </location>
</feature>
<feature type="sequence variant" id="VAR_080644" description="In PLCA3." evidence="13">
    <location>
        <begin position="220"/>
        <end position="572"/>
    </location>
</feature>
<feature type="sequence variant" id="VAR_050603" description="In dbSNP:rs35499907." evidence="13">
    <original>S</original>
    <variation>F</variation>
    <location>
        <position position="294"/>
    </location>
</feature>
<feature type="sequence variant" id="VAR_050604" description="In dbSNP:rs35363287.">
    <original>P</original>
    <variation>L</variation>
    <location>
        <position position="324"/>
    </location>
</feature>
<feature type="sequence variant" id="VAR_036263" description="In a breast cancer sample; somatic mutation." evidence="10">
    <original>S</original>
    <variation>I</variation>
    <location>
        <position position="531"/>
    </location>
</feature>
<feature type="sequence variant" id="VAR_050605" description="In dbSNP:rs35878037.">
    <original>S</original>
    <variation>R</variation>
    <location>
        <position position="538"/>
    </location>
</feature>
<feature type="sequence conflict" description="In Ref. 3; AAQ89481." evidence="17" ref="3">
    <original>A</original>
    <variation>T</variation>
    <location>
        <position position="354"/>
    </location>
</feature>
<proteinExistence type="evidence at protein level"/>
<reference key="1">
    <citation type="journal article" date="1995" name="Int. J. Cancer">
        <title>NMB, a novel gene, is expressed in low-metastatic human melanoma cell lines and xenografts.</title>
        <authorList>
            <person name="Weterman M.A.J."/>
            <person name="Ajubi N."/>
            <person name="van Dinter I.M.R."/>
            <person name="Degen W.G.J."/>
            <person name="van Muijen G.N.P."/>
            <person name="Ruiter D.J."/>
            <person name="Bloemers H.P.J."/>
        </authorList>
    </citation>
    <scope>NUCLEOTIDE SEQUENCE [MRNA] (ISOFORM 2)</scope>
    <scope>TISSUE SPECIFICITY</scope>
    <source>
        <tissue>Melanoma</tissue>
    </source>
</reference>
<reference key="2">
    <citation type="journal article" date="2003" name="Regul. Pept.">
        <title>Hematopoietic growth factor inducible neurokinin-1 type: a transmembrane protein that is similar to neurokinin 1 interacts with substance P.</title>
        <authorList>
            <person name="Bandari P.S."/>
            <person name="Qian J."/>
            <person name="Yehia G."/>
            <person name="Joshi D.D."/>
            <person name="Maloof P.B."/>
            <person name="Potian J."/>
            <person name="Oh H.S."/>
            <person name="Gascon P."/>
            <person name="Harrison J.S."/>
            <person name="Rameshwar P."/>
        </authorList>
    </citation>
    <scope>NUCLEOTIDE SEQUENCE [MRNA] (ISOFORM 2)</scope>
    <scope>TISSUE SPECIFICITY</scope>
    <scope>INDUCTION BY G-CSF AND M-CSF</scope>
    <source>
        <tissue>Peripheral blood</tissue>
    </source>
</reference>
<reference key="3">
    <citation type="journal article" date="2003" name="Genome Res.">
        <title>The secreted protein discovery initiative (SPDI), a large-scale effort to identify novel human secreted and transmembrane proteins: a bioinformatics assessment.</title>
        <authorList>
            <person name="Clark H.F."/>
            <person name="Gurney A.L."/>
            <person name="Abaya E."/>
            <person name="Baker K."/>
            <person name="Baldwin D.T."/>
            <person name="Brush J."/>
            <person name="Chen J."/>
            <person name="Chow B."/>
            <person name="Chui C."/>
            <person name="Crowley C."/>
            <person name="Currell B."/>
            <person name="Deuel B."/>
            <person name="Dowd P."/>
            <person name="Eaton D."/>
            <person name="Foster J.S."/>
            <person name="Grimaldi C."/>
            <person name="Gu Q."/>
            <person name="Hass P.E."/>
            <person name="Heldens S."/>
            <person name="Huang A."/>
            <person name="Kim H.S."/>
            <person name="Klimowski L."/>
            <person name="Jin Y."/>
            <person name="Johnson S."/>
            <person name="Lee J."/>
            <person name="Lewis L."/>
            <person name="Liao D."/>
            <person name="Mark M.R."/>
            <person name="Robbie E."/>
            <person name="Sanchez C."/>
            <person name="Schoenfeld J."/>
            <person name="Seshagiri S."/>
            <person name="Simmons L."/>
            <person name="Singh J."/>
            <person name="Smith V."/>
            <person name="Stinson J."/>
            <person name="Vagts A."/>
            <person name="Vandlen R.L."/>
            <person name="Watanabe C."/>
            <person name="Wieand D."/>
            <person name="Woods K."/>
            <person name="Xie M.-H."/>
            <person name="Yansura D.G."/>
            <person name="Yi S."/>
            <person name="Yu G."/>
            <person name="Yuan J."/>
            <person name="Zhang M."/>
            <person name="Zhang Z."/>
            <person name="Goddard A.D."/>
            <person name="Wood W.I."/>
            <person name="Godowski P.J."/>
            <person name="Gray A.M."/>
        </authorList>
    </citation>
    <scope>NUCLEOTIDE SEQUENCE [LARGE SCALE MRNA] (ISOFORM 1)</scope>
</reference>
<reference key="4">
    <citation type="journal article" date="2003" name="Science">
        <title>Human chromosome 7: DNA sequence and biology.</title>
        <authorList>
            <person name="Scherer S.W."/>
            <person name="Cheung J."/>
            <person name="MacDonald J.R."/>
            <person name="Osborne L.R."/>
            <person name="Nakabayashi K."/>
            <person name="Herbrick J.-A."/>
            <person name="Carson A.R."/>
            <person name="Parker-Katiraee L."/>
            <person name="Skaug J."/>
            <person name="Khaja R."/>
            <person name="Zhang J."/>
            <person name="Hudek A.K."/>
            <person name="Li M."/>
            <person name="Haddad M."/>
            <person name="Duggan G.E."/>
            <person name="Fernandez B.A."/>
            <person name="Kanematsu E."/>
            <person name="Gentles S."/>
            <person name="Christopoulos C.C."/>
            <person name="Choufani S."/>
            <person name="Kwasnicka D."/>
            <person name="Zheng X.H."/>
            <person name="Lai Z."/>
            <person name="Nusskern D.R."/>
            <person name="Zhang Q."/>
            <person name="Gu Z."/>
            <person name="Lu F."/>
            <person name="Zeesman S."/>
            <person name="Nowaczyk M.J."/>
            <person name="Teshima I."/>
            <person name="Chitayat D."/>
            <person name="Shuman C."/>
            <person name="Weksberg R."/>
            <person name="Zackai E.H."/>
            <person name="Grebe T.A."/>
            <person name="Cox S.R."/>
            <person name="Kirkpatrick S.J."/>
            <person name="Rahman N."/>
            <person name="Friedman J.M."/>
            <person name="Heng H.H.Q."/>
            <person name="Pelicci P.G."/>
            <person name="Lo-Coco F."/>
            <person name="Belloni E."/>
            <person name="Shaffer L.G."/>
            <person name="Pober B."/>
            <person name="Morton C.C."/>
            <person name="Gusella J.F."/>
            <person name="Bruns G.A.P."/>
            <person name="Korf B.R."/>
            <person name="Quade B.J."/>
            <person name="Ligon A.H."/>
            <person name="Ferguson H."/>
            <person name="Higgins A.W."/>
            <person name="Leach N.T."/>
            <person name="Herrick S.R."/>
            <person name="Lemyre E."/>
            <person name="Farra C.G."/>
            <person name="Kim H.-G."/>
            <person name="Summers A.M."/>
            <person name="Gripp K.W."/>
            <person name="Roberts W."/>
            <person name="Szatmari P."/>
            <person name="Winsor E.J.T."/>
            <person name="Grzeschik K.-H."/>
            <person name="Teebi A."/>
            <person name="Minassian B.A."/>
            <person name="Kere J."/>
            <person name="Armengol L."/>
            <person name="Pujana M.A."/>
            <person name="Estivill X."/>
            <person name="Wilson M.D."/>
            <person name="Koop B.F."/>
            <person name="Tosi S."/>
            <person name="Moore G.E."/>
            <person name="Boright A.P."/>
            <person name="Zlotorynski E."/>
            <person name="Kerem B."/>
            <person name="Kroisel P.M."/>
            <person name="Petek E."/>
            <person name="Oscier D.G."/>
            <person name="Mould S.J."/>
            <person name="Doehner H."/>
            <person name="Doehner K."/>
            <person name="Rommens J.M."/>
            <person name="Vincent J.B."/>
            <person name="Venter J.C."/>
            <person name="Li P.W."/>
            <person name="Mural R.J."/>
            <person name="Adams M.D."/>
            <person name="Tsui L.-C."/>
        </authorList>
    </citation>
    <scope>NUCLEOTIDE SEQUENCE [LARGE SCALE GENOMIC DNA]</scope>
</reference>
<reference key="5">
    <citation type="submission" date="2005-07" db="EMBL/GenBank/DDBJ databases">
        <authorList>
            <person name="Mural R.J."/>
            <person name="Istrail S."/>
            <person name="Sutton G.G."/>
            <person name="Florea L."/>
            <person name="Halpern A.L."/>
            <person name="Mobarry C.M."/>
            <person name="Lippert R."/>
            <person name="Walenz B."/>
            <person name="Shatkay H."/>
            <person name="Dew I."/>
            <person name="Miller J.R."/>
            <person name="Flanigan M.J."/>
            <person name="Edwards N.J."/>
            <person name="Bolanos R."/>
            <person name="Fasulo D."/>
            <person name="Halldorsson B.V."/>
            <person name="Hannenhalli S."/>
            <person name="Turner R."/>
            <person name="Yooseph S."/>
            <person name="Lu F."/>
            <person name="Nusskern D.R."/>
            <person name="Shue B.C."/>
            <person name="Zheng X.H."/>
            <person name="Zhong F."/>
            <person name="Delcher A.L."/>
            <person name="Huson D.H."/>
            <person name="Kravitz S.A."/>
            <person name="Mouchard L."/>
            <person name="Reinert K."/>
            <person name="Remington K.A."/>
            <person name="Clark A.G."/>
            <person name="Waterman M.S."/>
            <person name="Eichler E.E."/>
            <person name="Adams M.D."/>
            <person name="Hunkapiller M.W."/>
            <person name="Myers E.W."/>
            <person name="Venter J.C."/>
        </authorList>
    </citation>
    <scope>NUCLEOTIDE SEQUENCE [LARGE SCALE GENOMIC DNA]</scope>
</reference>
<reference key="6">
    <citation type="journal article" date="2003" name="Nature">
        <title>The DNA sequence of human chromosome 7.</title>
        <authorList>
            <person name="Hillier L.W."/>
            <person name="Fulton R.S."/>
            <person name="Fulton L.A."/>
            <person name="Graves T.A."/>
            <person name="Pepin K.H."/>
            <person name="Wagner-McPherson C."/>
            <person name="Layman D."/>
            <person name="Maas J."/>
            <person name="Jaeger S."/>
            <person name="Walker R."/>
            <person name="Wylie K."/>
            <person name="Sekhon M."/>
            <person name="Becker M.C."/>
            <person name="O'Laughlin M.D."/>
            <person name="Schaller M.E."/>
            <person name="Fewell G.A."/>
            <person name="Delehaunty K.D."/>
            <person name="Miner T.L."/>
            <person name="Nash W.E."/>
            <person name="Cordes M."/>
            <person name="Du H."/>
            <person name="Sun H."/>
            <person name="Edwards J."/>
            <person name="Bradshaw-Cordum H."/>
            <person name="Ali J."/>
            <person name="Andrews S."/>
            <person name="Isak A."/>
            <person name="Vanbrunt A."/>
            <person name="Nguyen C."/>
            <person name="Du F."/>
            <person name="Lamar B."/>
            <person name="Courtney L."/>
            <person name="Kalicki J."/>
            <person name="Ozersky P."/>
            <person name="Bielicki L."/>
            <person name="Scott K."/>
            <person name="Holmes A."/>
            <person name="Harkins R."/>
            <person name="Harris A."/>
            <person name="Strong C.M."/>
            <person name="Hou S."/>
            <person name="Tomlinson C."/>
            <person name="Dauphin-Kohlberg S."/>
            <person name="Kozlowicz-Reilly A."/>
            <person name="Leonard S."/>
            <person name="Rohlfing T."/>
            <person name="Rock S.M."/>
            <person name="Tin-Wollam A.-M."/>
            <person name="Abbott A."/>
            <person name="Minx P."/>
            <person name="Maupin R."/>
            <person name="Strowmatt C."/>
            <person name="Latreille P."/>
            <person name="Miller N."/>
            <person name="Johnson D."/>
            <person name="Murray J."/>
            <person name="Woessner J.P."/>
            <person name="Wendl M.C."/>
            <person name="Yang S.-P."/>
            <person name="Schultz B.R."/>
            <person name="Wallis J.W."/>
            <person name="Spieth J."/>
            <person name="Bieri T.A."/>
            <person name="Nelson J.O."/>
            <person name="Berkowicz N."/>
            <person name="Wohldmann P.E."/>
            <person name="Cook L.L."/>
            <person name="Hickenbotham M.T."/>
            <person name="Eldred J."/>
            <person name="Williams D."/>
            <person name="Bedell J.A."/>
            <person name="Mardis E.R."/>
            <person name="Clifton S.W."/>
            <person name="Chissoe S.L."/>
            <person name="Marra M.A."/>
            <person name="Raymond C."/>
            <person name="Haugen E."/>
            <person name="Gillett W."/>
            <person name="Zhou Y."/>
            <person name="James R."/>
            <person name="Phelps K."/>
            <person name="Iadanoto S."/>
            <person name="Bubb K."/>
            <person name="Simms E."/>
            <person name="Levy R."/>
            <person name="Clendenning J."/>
            <person name="Kaul R."/>
            <person name="Kent W.J."/>
            <person name="Furey T.S."/>
            <person name="Baertsch R.A."/>
            <person name="Brent M.R."/>
            <person name="Keibler E."/>
            <person name="Flicek P."/>
            <person name="Bork P."/>
            <person name="Suyama M."/>
            <person name="Bailey J.A."/>
            <person name="Portnoy M.E."/>
            <person name="Torrents D."/>
            <person name="Chinwalla A.T."/>
            <person name="Gish W.R."/>
            <person name="Eddy S.R."/>
            <person name="McPherson J.D."/>
            <person name="Olson M.V."/>
            <person name="Eichler E.E."/>
            <person name="Green E.D."/>
            <person name="Waterston R.H."/>
            <person name="Wilson R.K."/>
        </authorList>
    </citation>
    <scope>NUCLEOTIDE SEQUENCE [LARGE SCALE GENOMIC DNA]</scope>
</reference>
<reference key="7">
    <citation type="journal article" date="2004" name="Genome Res.">
        <title>The status, quality, and expansion of the NIH full-length cDNA project: the Mammalian Gene Collection (MGC).</title>
        <authorList>
            <consortium name="The MGC Project Team"/>
        </authorList>
    </citation>
    <scope>NUCLEOTIDE SEQUENCE [LARGE SCALE MRNA] (ISOFORM 1)</scope>
    <source>
        <tissue>Brain</tissue>
    </source>
</reference>
<reference key="8">
    <citation type="journal article" date="2003" name="J. Proteome Res.">
        <title>Proteomic analysis of early melanosomes: identification of novel melanosomal proteins.</title>
        <authorList>
            <person name="Basrur V."/>
            <person name="Yang F."/>
            <person name="Kushimoto T."/>
            <person name="Higashimoto Y."/>
            <person name="Yasumoto K."/>
            <person name="Valencia J."/>
            <person name="Muller J."/>
            <person name="Vieira W.D."/>
            <person name="Watabe H."/>
            <person name="Shabanowitz J."/>
            <person name="Hearing V.J."/>
            <person name="Hunt D.F."/>
            <person name="Appella E."/>
        </authorList>
    </citation>
    <scope>SUBCELLULAR LOCATION [LARGE SCALE ANALYSIS]</scope>
    <source>
        <tissue>Melanoma</tissue>
    </source>
</reference>
<reference key="9">
    <citation type="journal article" date="2006" name="Clin. Cancer Res.">
        <title>CR011, a fully human monoclonal antibody-auristatin E conjugate, for the treatment of melanoma.</title>
        <authorList>
            <person name="Tse K.F."/>
            <person name="Jeffers M."/>
            <person name="Pollack V.A."/>
            <person name="McCabe D.A."/>
            <person name="Shadish M.L."/>
            <person name="Khramtsov N.V."/>
            <person name="Hackett C.S."/>
            <person name="Shenoy S.G."/>
            <person name="Kuang B."/>
            <person name="Boldog F.L."/>
            <person name="MacDougall J.R."/>
            <person name="Rastelli L."/>
            <person name="Herrmann J."/>
            <person name="Gallo M."/>
            <person name="Gazit-Bornstein G."/>
            <person name="Senter P.D."/>
            <person name="Meyer D.L."/>
            <person name="Lichenstein H.S."/>
            <person name="LaRochelle W.J."/>
        </authorList>
    </citation>
    <scope>SUBCELLULAR LOCATION</scope>
    <scope>TOPOLOGY</scope>
    <scope>TISSUE SPECIFICITY</scope>
    <scope>GLYCOSYLATION</scope>
    <scope>ALTERNATIVE SPLICING</scope>
    <scope>POTENTIAL TUMOR-ASSOCIATED ANTIGEN FOR IMMUNOTHERAPY</scope>
    <scope>DISEASE</scope>
</reference>
<reference key="10">
    <citation type="journal article" date="2006" name="Clin. Cancer Res.">
        <title>Glycoprotein nonmetastatic melanoma protein B, a potential molecular therapeutic target in patients with glioblastoma multiforme.</title>
        <authorList>
            <person name="Kuan C.T."/>
            <person name="Wakiya K."/>
            <person name="Dowell J.M."/>
            <person name="Herndon J.E. II"/>
            <person name="Reardon D.A."/>
            <person name="Graner M.W."/>
            <person name="Riggins G.J."/>
            <person name="Wikstrand C.J."/>
            <person name="Bigner D.D."/>
        </authorList>
    </citation>
    <scope>SUBCELLULAR LOCATION</scope>
    <scope>TOPOLOGY</scope>
    <scope>TISSUE SPECIFICITY</scope>
    <scope>ALTERNATIVE SPLICING</scope>
    <scope>DISEASE</scope>
</reference>
<reference key="11">
    <citation type="journal article" date="2006" name="J. Proteome Res.">
        <title>Proteomic and bioinformatic characterization of the biogenesis and function of melanosomes.</title>
        <authorList>
            <person name="Chi A."/>
            <person name="Valencia J.C."/>
            <person name="Hu Z.-Z."/>
            <person name="Watabe H."/>
            <person name="Yamaguchi H."/>
            <person name="Mangini N.J."/>
            <person name="Huang H."/>
            <person name="Canfield V.A."/>
            <person name="Cheng K.C."/>
            <person name="Yang F."/>
            <person name="Abe R."/>
            <person name="Yamagishi S."/>
            <person name="Shabanowitz J."/>
            <person name="Hearing V.J."/>
            <person name="Wu C."/>
            <person name="Appella E."/>
            <person name="Hunt D.F."/>
        </authorList>
    </citation>
    <scope>SUBCELLULAR LOCATION [LARGE SCALE ANALYSIS]</scope>
    <source>
        <tissue>Melanoma</tissue>
    </source>
</reference>
<reference key="12">
    <citation type="journal article" date="2009" name="J. Proteome Res.">
        <title>Glycoproteomics analysis of human liver tissue by combination of multiple enzyme digestion and hydrazide chemistry.</title>
        <authorList>
            <person name="Chen R."/>
            <person name="Jiang X."/>
            <person name="Sun D."/>
            <person name="Han G."/>
            <person name="Wang F."/>
            <person name="Ye M."/>
            <person name="Wang L."/>
            <person name="Zou H."/>
        </authorList>
    </citation>
    <scope>GLYCOSYLATION [LARGE SCALE ANALYSIS] AT ASN-200; ASN-249; ASN-275; ASN-296; ASN-300 AND ASN-306</scope>
    <source>
        <tissue>Liver</tissue>
    </source>
</reference>
<reference key="13">
    <citation type="journal article" date="2015" name="Proteomics">
        <title>N-terminome analysis of the human mitochondrial proteome.</title>
        <authorList>
            <person name="Vaca Jacome A.S."/>
            <person name="Rabilloud T."/>
            <person name="Schaeffer-Reiss C."/>
            <person name="Rompais M."/>
            <person name="Ayoub D."/>
            <person name="Lane L."/>
            <person name="Bairoch A."/>
            <person name="Van Dorsselaer A."/>
            <person name="Carapito C."/>
        </authorList>
    </citation>
    <scope>IDENTIFICATION BY MASS SPECTROMETRY [LARGE SCALE ANALYSIS]</scope>
</reference>
<reference key="14">
    <citation type="journal article" date="2006" name="Science">
        <title>The consensus coding sequences of human breast and colorectal cancers.</title>
        <authorList>
            <person name="Sjoeblom T."/>
            <person name="Jones S."/>
            <person name="Wood L.D."/>
            <person name="Parsons D.W."/>
            <person name="Lin J."/>
            <person name="Barber T.D."/>
            <person name="Mandelker D."/>
            <person name="Leary R.J."/>
            <person name="Ptak J."/>
            <person name="Silliman N."/>
            <person name="Szabo S."/>
            <person name="Buckhaults P."/>
            <person name="Farrell C."/>
            <person name="Meeh P."/>
            <person name="Markowitz S.D."/>
            <person name="Willis J."/>
            <person name="Dawson D."/>
            <person name="Willson J.K.V."/>
            <person name="Gazdar A.F."/>
            <person name="Hartigan J."/>
            <person name="Wu L."/>
            <person name="Liu C."/>
            <person name="Parmigiani G."/>
            <person name="Park B.H."/>
            <person name="Bachman K.E."/>
            <person name="Papadopoulos N."/>
            <person name="Vogelstein B."/>
            <person name="Kinzler K.W."/>
            <person name="Velculescu V.E."/>
        </authorList>
    </citation>
    <scope>VARIANTS [LARGE SCALE ANALYSIS] ASP-110 AND ILE-531</scope>
</reference>
<reference key="15">
    <citation type="journal article" date="2018" name="Am. J. Hum. Genet.">
        <title>Loss of GPNMB Causes Autosomal-Recessive Amyloidosis Cutis Dyschromica in Humans.</title>
        <authorList>
            <person name="Yang C.F."/>
            <person name="Lin S.P."/>
            <person name="Chiang C.P."/>
            <person name="Wu Y.H."/>
            <person name="H'ng W.S."/>
            <person name="Chang C.P."/>
            <person name="Chen Y.T."/>
            <person name="Wu J.Y."/>
        </authorList>
    </citation>
    <scope>INVOLVEMENT IN PLCA3</scope>
    <scope>VARIANTS PLCA3 189-ARG--SER-572 DEL AND 220-TYR--SER-572 DEL</scope>
    <scope>CHARACTERIZATION OF VARIANT PLCA3 189-ARG--SER-572 DEL</scope>
    <scope>SUBCELLULAR LOCATION</scope>
    <scope>TISSUE SPECIFICITY</scope>
    <scope>VARIANT PHE-294</scope>
</reference>
<accession>Q14956</accession>
<accession>A4D155</accession>
<accession>Q6UVX1</accession>
<accession>Q8N1A1</accession>
<comment type="function">
    <text evidence="1">Could be a melanogenic enzyme.</text>
</comment>
<comment type="interaction">
    <interactant intactId="EBI-7250369">
        <id>Q14956</id>
    </interactant>
    <interactant intactId="EBI-297353">
        <id>P00533</id>
        <label>EGFR</label>
    </interactant>
    <organismsDiffer>false</organismsDiffer>
    <experiments>3</experiments>
</comment>
<comment type="interaction">
    <interactant intactId="EBI-16191078">
        <id>Q14956-1</id>
    </interactant>
    <interactant intactId="EBI-297353">
        <id>P00533</id>
        <label>EGFR</label>
    </interactant>
    <organismsDiffer>false</organismsDiffer>
    <experiments>2</experiments>
</comment>
<comment type="subcellular location">
    <subcellularLocation>
        <location>Cell membrane</location>
        <topology evidence="8 9">Single-pass type I membrane protein</topology>
    </subcellularLocation>
    <subcellularLocation>
        <location evidence="7 11">Melanosome membrane</location>
        <topology evidence="17">Single-pass type I membrane protein</topology>
    </subcellularLocation>
    <subcellularLocation>
        <location evidence="13">Early endosome membrane</location>
        <topology evidence="17">Single-pass type I membrane protein</topology>
    </subcellularLocation>
    <text evidence="11">Identified by mass spectrometry in melanosome fractions from stage I to stage IV.</text>
</comment>
<comment type="alternative products">
    <event type="alternative splicing"/>
    <isoform>
        <id>Q14956-1</id>
        <name>1</name>
        <sequence type="displayed"/>
    </isoform>
    <isoform>
        <id>Q14956-2</id>
        <name>2</name>
        <sequence type="described" ref="VSP_013001"/>
    </isoform>
</comment>
<comment type="tissue specificity">
    <text evidence="6 8 9 13 14">Widely expressed, but very low expression, if any, in the brain (PubMed:12609765, PubMed:16609006). Expressed in the epidermis with higher levels in melanocytes compared with keratinocytes and Langerhans cells (at protein level) (PubMed:29336782). Expressed in peripheral blood, but not bone marrow mononuclear cells (PubMed:12609765). Expressed in tissue macrophages, including liver Kuppfer cells and lung alveolar macrophages, in podocytes and in some cells of the ciliary body of the eye (at protein level) (PubMed:16489096). May be overexpressed in various cancers, including melanoma and glioblastoma multiforme (PubMed:16489096, PubMed:16609006, PubMed:7814155).</text>
</comment>
<comment type="induction">
    <text evidence="6">Up-regulated by G-CSF/CSF3 and M-CSF/CSF1 in bone marrow mononuclear cells, hence up-regulation may be linked to differentiation.</text>
</comment>
<comment type="disease">
    <text evidence="8 9">Increased expression levels in glioblastoma multiforme biopsy samples correlate with poor patient survival prognosis (PubMed:16609006). Has been proposed as a potential target for antibodies coupled to cytotoxic drugs in the context of cancer immunotherapy, including that of melanoma (PubMed:16489096).</text>
</comment>
<comment type="disease" evidence="13">
    <disease id="DI-05216">
        <name>Amyloidosis, primary localized cutaneous, 3</name>
        <acronym>PLCA3</acronym>
        <description>A primary amyloidosis characterized by localized cutaneous amyloid deposition. This condition usually presents with itching (especially on the lower legs) and visible changes of skin hyperpigmentation and thickening that may be exacerbated by chronic scratching and rubbing. Primary localized cutaneous amyloidosis is often divided into macular and lichen subtypes although many affected individuals often show both variants coexisting. Lichen amyloidosis characteristically presents as a pruritic eruption of grouped hyperkeratotic papules with a predilection for the shins, calves, ankles and dorsa of feet and thighs. Papules may coalesce to form hyperkeratotic plaques that can resemble lichen planus, lichen simplex or nodular prurigo. Macular amyloidosis is characterized by small pigmented macules that may merge to produce macular hyperpigmentation, sometimes with a reticulate or rippled pattern. In macular and lichen amyloidosis, amyloid is deposited in the papillary dermis in association with grouped colloid bodies, thought to represent degenerate basal keratinocytes. The amyloid deposits probably reflect a combination of degenerate keratin filaments, serum amyloid P component, and deposition of immunoglobulins. PLCA3 inheritance is autosomal recessive.</description>
        <dbReference type="MIM" id="617920"/>
    </disease>
    <text>The disease is caused by variants affecting the gene represented in this entry.</text>
</comment>
<comment type="similarity">
    <text evidence="17">Belongs to the PMEL/NMB family.</text>
</comment>
<comment type="online information" name="Atlas of Genetics and Cytogenetics in Oncology and Haematology">
    <link uri="https://atlasgeneticsoncology.org/gene/40739/GPNMB"/>
</comment>
<gene>
    <name type="primary">GPNMB</name>
    <name evidence="15" type="synonym">HGFIN</name>
    <name type="synonym">NMB</name>
    <name type="ORF">UNQ1725/PRO9925</name>
</gene>